<keyword id="KW-0002">3D-structure</keyword>
<keyword id="KW-0030">Aminoacyl-tRNA synthetase</keyword>
<keyword id="KW-0067">ATP-binding</keyword>
<keyword id="KW-0963">Cytoplasm</keyword>
<keyword id="KW-0903">Direct protein sequencing</keyword>
<keyword id="KW-0436">Ligase</keyword>
<keyword id="KW-0479">Metal-binding</keyword>
<keyword id="KW-0547">Nucleotide-binding</keyword>
<keyword id="KW-0597">Phosphoprotein</keyword>
<keyword id="KW-0648">Protein biosynthesis</keyword>
<keyword id="KW-1185">Reference proteome</keyword>
<keyword id="KW-0862">Zinc</keyword>
<evidence type="ECO:0000250" key="1"/>
<evidence type="ECO:0000255" key="2">
    <source>
        <dbReference type="HAMAP-Rule" id="MF_00022"/>
    </source>
</evidence>
<evidence type="ECO:0000269" key="3">
    <source>
    </source>
</evidence>
<evidence type="ECO:0000269" key="4">
    <source>
    </source>
</evidence>
<evidence type="ECO:0000269" key="5">
    <source>
    </source>
</evidence>
<evidence type="ECO:0000269" key="6">
    <source>
    </source>
</evidence>
<evidence type="ECO:0000269" key="7">
    <source>
    </source>
</evidence>
<evidence type="ECO:0000269" key="8">
    <source>
    </source>
</evidence>
<evidence type="ECO:0000269" key="9">
    <source>
    </source>
</evidence>
<evidence type="ECO:0000269" key="10">
    <source>
    </source>
</evidence>
<evidence type="ECO:0000269" key="11">
    <source>
    </source>
</evidence>
<evidence type="ECO:0007829" key="12">
    <source>
        <dbReference type="PDB" id="8I9I"/>
    </source>
</evidence>
<accession>P04805</accession>
<gene>
    <name evidence="2" type="primary">gltX</name>
    <name type="ordered locus">b2400</name>
    <name type="ordered locus">JW2395</name>
</gene>
<reference key="1">
    <citation type="journal article" date="1986" name="J. Biol. Chem.">
        <title>Glutamyl-tRNA synthetase of Escherichia coli. Isolation and primary structure of the gltX gene and homology with other aminoacyl-tRNA synthetases.</title>
        <authorList>
            <person name="Breton R."/>
            <person name="Sanfacon H."/>
            <person name="Papayannopoulos I."/>
            <person name="Biemann K."/>
            <person name="Lapointe J."/>
        </authorList>
    </citation>
    <scope>NUCLEOTIDE SEQUENCE [GENOMIC DNA]</scope>
    <scope>SUBUNIT</scope>
</reference>
<reference key="2">
    <citation type="journal article" date="1997" name="DNA Res.">
        <title>Construction of a contiguous 874-kb sequence of the Escherichia coli-K12 genome corresponding to 50.0-68.8 min on the linkage map and analysis of its sequence features.</title>
        <authorList>
            <person name="Yamamoto Y."/>
            <person name="Aiba H."/>
            <person name="Baba T."/>
            <person name="Hayashi K."/>
            <person name="Inada T."/>
            <person name="Isono K."/>
            <person name="Itoh T."/>
            <person name="Kimura S."/>
            <person name="Kitagawa M."/>
            <person name="Makino K."/>
            <person name="Miki T."/>
            <person name="Mitsuhashi N."/>
            <person name="Mizobuchi K."/>
            <person name="Mori H."/>
            <person name="Nakade S."/>
            <person name="Nakamura Y."/>
            <person name="Nashimoto H."/>
            <person name="Oshima T."/>
            <person name="Oyama S."/>
            <person name="Saito N."/>
            <person name="Sampei G."/>
            <person name="Satoh Y."/>
            <person name="Sivasundaram S."/>
            <person name="Tagami H."/>
            <person name="Takahashi H."/>
            <person name="Takeda J."/>
            <person name="Takemoto K."/>
            <person name="Uehara K."/>
            <person name="Wada C."/>
            <person name="Yamagata S."/>
            <person name="Horiuchi T."/>
        </authorList>
    </citation>
    <scope>NUCLEOTIDE SEQUENCE [LARGE SCALE GENOMIC DNA]</scope>
    <source>
        <strain>K12 / W3110 / ATCC 27325 / DSM 5911</strain>
    </source>
</reference>
<reference key="3">
    <citation type="journal article" date="1997" name="Science">
        <title>The complete genome sequence of Escherichia coli K-12.</title>
        <authorList>
            <person name="Blattner F.R."/>
            <person name="Plunkett G. III"/>
            <person name="Bloch C.A."/>
            <person name="Perna N.T."/>
            <person name="Burland V."/>
            <person name="Riley M."/>
            <person name="Collado-Vides J."/>
            <person name="Glasner J.D."/>
            <person name="Rode C.K."/>
            <person name="Mayhew G.F."/>
            <person name="Gregor J."/>
            <person name="Davis N.W."/>
            <person name="Kirkpatrick H.A."/>
            <person name="Goeden M.A."/>
            <person name="Rose D.J."/>
            <person name="Mau B."/>
            <person name="Shao Y."/>
        </authorList>
    </citation>
    <scope>NUCLEOTIDE SEQUENCE [LARGE SCALE GENOMIC DNA]</scope>
    <source>
        <strain>K12 / MG1655 / ATCC 47076</strain>
    </source>
</reference>
<reference key="4">
    <citation type="journal article" date="2006" name="Mol. Syst. Biol.">
        <title>Highly accurate genome sequences of Escherichia coli K-12 strains MG1655 and W3110.</title>
        <authorList>
            <person name="Hayashi K."/>
            <person name="Morooka N."/>
            <person name="Yamamoto Y."/>
            <person name="Fujita K."/>
            <person name="Isono K."/>
            <person name="Choi S."/>
            <person name="Ohtsubo E."/>
            <person name="Baba T."/>
            <person name="Wanner B.L."/>
            <person name="Mori H."/>
            <person name="Horiuchi T."/>
        </authorList>
    </citation>
    <scope>NUCLEOTIDE SEQUENCE [LARGE SCALE GENOMIC DNA]</scope>
    <source>
        <strain>K12 / W3110 / ATCC 27325 / DSM 5911</strain>
    </source>
</reference>
<reference key="5">
    <citation type="journal article" date="1990" name="J. Mol. Biol.">
        <title>Closely spaced and divergent promoters for an aminoacyl-tRNA synthetase gene and a tRNA operon in Escherichia coli. Transcriptional and post-transcriptional regulation of gltX, valU and alaW.</title>
        <authorList>
            <person name="Brun V."/>
            <person name="Sanfacon H."/>
            <person name="Breton R."/>
            <person name="Lapointe J."/>
        </authorList>
    </citation>
    <scope>NUCLEOTIDE SEQUENCE [GENOMIC DNA] OF 1-57</scope>
</reference>
<reference key="6">
    <citation type="journal article" date="1993" name="Biochemistry">
        <title>The glutamyl-tRNA synthetase of Escherichia coli contains one atom of zinc essential for its native conformation and its catalytic activity.</title>
        <authorList>
            <person name="Liu J."/>
            <person name="Lin S.-X."/>
            <person name="Blochet J.-E."/>
            <person name="Pezolet M."/>
            <person name="Lapointe J."/>
        </authorList>
    </citation>
    <scope>PROTEIN SEQUENCE OF 112-116</scope>
    <scope>FUNCTION</scope>
    <scope>CATALYTIC ACTIVITY</scope>
    <scope>COFACTOR</scope>
    <scope>ACTIVITY REGULATION</scope>
</reference>
<reference key="7">
    <citation type="journal article" date="1980" name="Eur. J. Biochem.">
        <title>The catalytic mechanism of glutamyl-tRNA synthetase of Escherichia coli. Evidence for a two-step aminoacylation pathway, and study of the reactivity of the intermediate complex.</title>
        <authorList>
            <person name="Kern D."/>
            <person name="Lapointe J."/>
        </authorList>
    </citation>
    <scope>FUNCTION</scope>
</reference>
<reference key="8">
    <citation type="journal article" date="1980" name="J. Biol. Chem.">
        <title>The catalytic mechanism of the glutamyl-tRNA synthetase from Escherichia coli. Detection of an intermediate complex in which glutamate is activated.</title>
        <authorList>
            <person name="Kern D."/>
            <person name="Lapointe J."/>
        </authorList>
    </citation>
    <scope>FUNCTION</scope>
</reference>
<reference key="9">
    <citation type="journal article" date="1995" name="J. Biol. Chem.">
        <title>The zinc-binding site of Escherichia coli glutamyl-tRNA synthetase is located in the acceptor-binding domain. Studies by extended x-ray absorption fine structure, molecular modeling, and site-directed mutagenesis.</title>
        <authorList>
            <person name="Liu J."/>
            <person name="Gagnon Y."/>
            <person name="Gauthier J."/>
            <person name="Furenlid L."/>
            <person name="L'Heureux P.-J."/>
            <person name="Auger M."/>
            <person name="Nureki O."/>
            <person name="Yokoyama S."/>
            <person name="Lapointe J."/>
        </authorList>
    </citation>
    <scope>FUNCTION</scope>
    <scope>COFACTOR</scope>
    <scope>ZINC-BINDING SITES</scope>
    <scope>MUTAGENESIS OF CYS-98; CYS-100; CYS-125; HIS-127; HIS-129; HIS-131; HIS-132 AND CYS-138</scope>
</reference>
<reference key="10">
    <citation type="journal article" date="1997" name="Electrophoresis">
        <title>Escherichia coli proteome analysis using the gene-protein database.</title>
        <authorList>
            <person name="VanBogelen R.A."/>
            <person name="Abshire K.Z."/>
            <person name="Moldover B."/>
            <person name="Olson E.R."/>
            <person name="Neidhardt F.C."/>
        </authorList>
    </citation>
    <scope>IDENTIFICATION BY 2D-GEL</scope>
</reference>
<reference key="11">
    <citation type="journal article" date="2004" name="Eur. J. Biochem.">
        <title>The zinc-binding site of a class I aminoacyl-tRNA synthetase is a SWIM domain that modulates amino acid binding via the tRNA acceptor arm.</title>
        <authorList>
            <person name="Banerjee R."/>
            <person name="Dubois D.Y."/>
            <person name="Gauthier J."/>
            <person name="Lin S.-X."/>
            <person name="Roy S."/>
            <person name="Lapointe J."/>
        </authorList>
    </citation>
    <scope>FUNCTION</scope>
    <scope>BIOPHYSICOCHEMICAL PROPERTIES</scope>
    <scope>MUTAGENESIS OF CYS-100</scope>
</reference>
<reference key="12">
    <citation type="journal article" date="2013" name="Mol. Cell">
        <title>Molecular mechanism of bacterial persistence by HipA.</title>
        <authorList>
            <person name="Germain E."/>
            <person name="Castro-Roa D."/>
            <person name="Zenkin N."/>
            <person name="Gerdes K."/>
        </authorList>
    </citation>
    <scope>FUNCTION</scope>
    <scope>ACTIVITY REGULATION</scope>
    <scope>PHOSPHORYLATION AT SER-239 BY HIPA</scope>
    <scope>MASS SPECTROMETRY</scope>
    <scope>MUTAGENESIS OF SER-239</scope>
    <source>
        <strain>K12 / MG1655 / ATCC 47076</strain>
    </source>
</reference>
<reference key="13">
    <citation type="journal article" date="2013" name="Nat. Commun.">
        <title>HipA-mediated antibiotic persistence via phosphorylation of the glutamyl-tRNA-synthetase.</title>
        <authorList>
            <person name="Kaspy I."/>
            <person name="Rotem E."/>
            <person name="Weiss N."/>
            <person name="Ronin I."/>
            <person name="Balaban N.Q."/>
            <person name="Glaser G."/>
        </authorList>
    </citation>
    <scope>FUNCTION</scope>
    <scope>ACTIVITY REGULATION</scope>
    <scope>PHOSPHORYLATION AT SER-239 BY HIPA</scope>
    <source>
        <strain>K12 / MG1655 / ATCC 47076</strain>
    </source>
</reference>
<reference key="14">
    <citation type="journal article" date="2017" name="FEMS Microbiol. Lett.">
        <title>Characterization of YjjJ toxin of Escherichia coli.</title>
        <authorList>
            <person name="Maeda Y."/>
            <person name="Lin C.Y."/>
            <person name="Ishida Y."/>
            <person name="Inouye M."/>
            <person name="Yamaguchi Y."/>
            <person name="Phadtare S."/>
        </authorList>
    </citation>
    <scope>FUNCTION</scope>
    <source>
        <strain>B / BL21-DE3</strain>
    </source>
</reference>
<comment type="function">
    <text evidence="3 8 9 10 11">Catalyzes the attachment of glutamate to tRNA(Glu) in a two-step reaction: glutamate is first activated by ATP to form Glu-AMP and then transferred to the acceptor end of tRNA(Glu).</text>
</comment>
<comment type="function">
    <text evidence="4 5 6">Phosphorylation of GltX by HipA prevents it from being charged, leading to an increase in uncharged tRNA(Glu). This induces amino acid starvation and the stringent response via RelA/SpoT and increased (p)ppGpp levels, which inhibits replication, transcription, translation and cell wall synthesis, reducing growth and leading to multidrug resistance and persistence (PubMed:24095282, PubMed:24343429). Overexpression of GltX prevents HipA-induced growth arrest, persister formation and increases in (p)ppGpp levels (PubMed:24343429, PubMed:28430938).</text>
</comment>
<comment type="catalytic activity">
    <reaction evidence="2 11">
        <text>tRNA(Glu) + L-glutamate + ATP = L-glutamyl-tRNA(Glu) + AMP + diphosphate</text>
        <dbReference type="Rhea" id="RHEA:23540"/>
        <dbReference type="Rhea" id="RHEA-COMP:9663"/>
        <dbReference type="Rhea" id="RHEA-COMP:9680"/>
        <dbReference type="ChEBI" id="CHEBI:29985"/>
        <dbReference type="ChEBI" id="CHEBI:30616"/>
        <dbReference type="ChEBI" id="CHEBI:33019"/>
        <dbReference type="ChEBI" id="CHEBI:78442"/>
        <dbReference type="ChEBI" id="CHEBI:78520"/>
        <dbReference type="ChEBI" id="CHEBI:456215"/>
        <dbReference type="EC" id="6.1.1.17"/>
    </reaction>
</comment>
<comment type="cofactor">
    <cofactor evidence="2 10 11">
        <name>Zn(2+)</name>
        <dbReference type="ChEBI" id="CHEBI:29105"/>
    </cofactor>
    <text evidence="2 10 11">Binds 1 zinc ion per subunit.</text>
</comment>
<comment type="activity regulation">
    <text evidence="4 5 11">Inhibited by 1,10-phenanthroline (PubMed:8218204). Phosphorylation of Ser-239 by HipA inhibits aminoacylation of tRNA(Glu) (PubMed:24095282, PubMed:24343429).</text>
</comment>
<comment type="biophysicochemical properties">
    <kinetics>
        <KM evidence="3">0.32 uM for tRNA(Glu)</KM>
        <KM evidence="3">0.105 mM for Glu</KM>
    </kinetics>
</comment>
<comment type="subunit">
    <text evidence="2 7">Monomer.</text>
</comment>
<comment type="interaction">
    <interactant intactId="EBI-549949">
        <id>P04805</id>
    </interactant>
    <interactant intactId="EBI-544071">
        <id>P76160</id>
        <label>ydfR</label>
    </interactant>
    <organismsDiffer>false</organismsDiffer>
    <experiments>2</experiments>
</comment>
<comment type="subcellular location">
    <subcellularLocation>
        <location evidence="2">Cytoplasm</location>
    </subcellularLocation>
</comment>
<comment type="PTM">
    <text evidence="4 5">Phosphorylated by HipA on Ser-239 in the presence but not absence of tRNA(Glu). Phosphorylated protein cannot aminoacylate tRNA(Glu).</text>
</comment>
<comment type="mass spectrometry"/>
<comment type="mass spectrometry">
    <text>Phosphorylated.</text>
</comment>
<comment type="miscellaneous">
    <text>This is the smallest aminoacyl-tRNA synthetase of E.coli; it does not bind glutamate in the absence of cognate tRNA, which is therefore required for activation of the amino acid substrate.</text>
</comment>
<comment type="similarity">
    <text evidence="2">Belongs to the class-I aminoacyl-tRNA synthetase family. Glutamate--tRNA ligase type 1 subfamily.</text>
</comment>
<dbReference type="EC" id="6.1.1.17" evidence="2 11"/>
<dbReference type="EMBL" id="X63976">
    <property type="protein sequence ID" value="CAA45391.1"/>
    <property type="molecule type" value="Genomic_DNA"/>
</dbReference>
<dbReference type="EMBL" id="M13687">
    <property type="protein sequence ID" value="AAA65715.1"/>
    <property type="molecule type" value="Genomic_DNA"/>
</dbReference>
<dbReference type="EMBL" id="U00096">
    <property type="protein sequence ID" value="AAC75457.1"/>
    <property type="molecule type" value="Genomic_DNA"/>
</dbReference>
<dbReference type="EMBL" id="AP009048">
    <property type="protein sequence ID" value="BAA16272.1"/>
    <property type="molecule type" value="Genomic_DNA"/>
</dbReference>
<dbReference type="EMBL" id="X55737">
    <property type="protein sequence ID" value="CAA39269.1"/>
    <property type="molecule type" value="Genomic_DNA"/>
</dbReference>
<dbReference type="PIR" id="A25956">
    <property type="entry name" value="SYECET"/>
</dbReference>
<dbReference type="RefSeq" id="NP_416899.1">
    <property type="nucleotide sequence ID" value="NC_000913.3"/>
</dbReference>
<dbReference type="RefSeq" id="WP_000695655.1">
    <property type="nucleotide sequence ID" value="NZ_STEB01000008.1"/>
</dbReference>
<dbReference type="PDB" id="8I9I">
    <property type="method" value="X-ray"/>
    <property type="resolution" value="3.30 A"/>
    <property type="chains" value="A/B=1-468"/>
</dbReference>
<dbReference type="PDBsum" id="8I9I"/>
<dbReference type="SMR" id="P04805"/>
<dbReference type="BioGRID" id="4259193">
    <property type="interactions" value="58"/>
</dbReference>
<dbReference type="DIP" id="DIP-9810N"/>
<dbReference type="FunCoup" id="P04805">
    <property type="interactions" value="906"/>
</dbReference>
<dbReference type="IntAct" id="P04805">
    <property type="interactions" value="16"/>
</dbReference>
<dbReference type="STRING" id="511145.b2400"/>
<dbReference type="BindingDB" id="P04805"/>
<dbReference type="iPTMnet" id="P04805"/>
<dbReference type="jPOST" id="P04805"/>
<dbReference type="PaxDb" id="511145-b2400"/>
<dbReference type="EnsemblBacteria" id="AAC75457">
    <property type="protein sequence ID" value="AAC75457"/>
    <property type="gene ID" value="b2400"/>
</dbReference>
<dbReference type="GeneID" id="93774730"/>
<dbReference type="GeneID" id="946906"/>
<dbReference type="KEGG" id="ecj:JW2395"/>
<dbReference type="KEGG" id="eco:b2400"/>
<dbReference type="KEGG" id="ecoc:C3026_13335"/>
<dbReference type="PATRIC" id="fig|1411691.4.peg.4330"/>
<dbReference type="EchoBASE" id="EB0402"/>
<dbReference type="eggNOG" id="COG0008">
    <property type="taxonomic scope" value="Bacteria"/>
</dbReference>
<dbReference type="HOGENOM" id="CLU_015768_6_0_6"/>
<dbReference type="InParanoid" id="P04805"/>
<dbReference type="OMA" id="HGATNVM"/>
<dbReference type="OrthoDB" id="9807503at2"/>
<dbReference type="PhylomeDB" id="P04805"/>
<dbReference type="BioCyc" id="EcoCyc:GLURS-MONOMER"/>
<dbReference type="BioCyc" id="MetaCyc:GLURS-MONOMER"/>
<dbReference type="BRENDA" id="6.1.1.17">
    <property type="organism ID" value="2026"/>
</dbReference>
<dbReference type="SABIO-RK" id="P04805"/>
<dbReference type="PRO" id="PR:P04805"/>
<dbReference type="Proteomes" id="UP000000625">
    <property type="component" value="Chromosome"/>
</dbReference>
<dbReference type="GO" id="GO:0005829">
    <property type="term" value="C:cytosol"/>
    <property type="evidence" value="ECO:0000314"/>
    <property type="project" value="EcoCyc"/>
</dbReference>
<dbReference type="GO" id="GO:0005524">
    <property type="term" value="F:ATP binding"/>
    <property type="evidence" value="ECO:0007669"/>
    <property type="project" value="UniProtKB-UniRule"/>
</dbReference>
<dbReference type="GO" id="GO:0004818">
    <property type="term" value="F:glutamate-tRNA ligase activity"/>
    <property type="evidence" value="ECO:0000314"/>
    <property type="project" value="EcoCyc"/>
</dbReference>
<dbReference type="GO" id="GO:0000049">
    <property type="term" value="F:tRNA binding"/>
    <property type="evidence" value="ECO:0007669"/>
    <property type="project" value="InterPro"/>
</dbReference>
<dbReference type="GO" id="GO:0008270">
    <property type="term" value="F:zinc ion binding"/>
    <property type="evidence" value="ECO:0000314"/>
    <property type="project" value="EcoCyc"/>
</dbReference>
<dbReference type="GO" id="GO:0006424">
    <property type="term" value="P:glutamyl-tRNA aminoacylation"/>
    <property type="evidence" value="ECO:0000315"/>
    <property type="project" value="EcoCyc"/>
</dbReference>
<dbReference type="CDD" id="cd00808">
    <property type="entry name" value="GluRS_core"/>
    <property type="match status" value="1"/>
</dbReference>
<dbReference type="FunFam" id="1.10.10.350:FF:000001">
    <property type="entry name" value="Glutamate--tRNA ligase"/>
    <property type="match status" value="1"/>
</dbReference>
<dbReference type="FunFam" id="3.40.50.620:FF:000007">
    <property type="entry name" value="Glutamate--tRNA ligase"/>
    <property type="match status" value="1"/>
</dbReference>
<dbReference type="Gene3D" id="1.10.10.350">
    <property type="match status" value="1"/>
</dbReference>
<dbReference type="Gene3D" id="3.40.50.620">
    <property type="entry name" value="HUPs"/>
    <property type="match status" value="1"/>
</dbReference>
<dbReference type="HAMAP" id="MF_00022">
    <property type="entry name" value="Glu_tRNA_synth_type1"/>
    <property type="match status" value="1"/>
</dbReference>
<dbReference type="InterPro" id="IPR045462">
    <property type="entry name" value="aa-tRNA-synth_I_cd-bd"/>
</dbReference>
<dbReference type="InterPro" id="IPR020751">
    <property type="entry name" value="aa-tRNA-synth_I_codon-bd_sub2"/>
</dbReference>
<dbReference type="InterPro" id="IPR001412">
    <property type="entry name" value="aa-tRNA-synth_I_CS"/>
</dbReference>
<dbReference type="InterPro" id="IPR008925">
    <property type="entry name" value="aa_tRNA-synth_I_cd-bd_sf"/>
</dbReference>
<dbReference type="InterPro" id="IPR004527">
    <property type="entry name" value="Glu-tRNA-ligase_bac/mito"/>
</dbReference>
<dbReference type="InterPro" id="IPR000924">
    <property type="entry name" value="Glu/Gln-tRNA-synth"/>
</dbReference>
<dbReference type="InterPro" id="IPR020058">
    <property type="entry name" value="Glu/Gln-tRNA-synth_Ib_cat-dom"/>
</dbReference>
<dbReference type="InterPro" id="IPR049940">
    <property type="entry name" value="GluQ/Sye"/>
</dbReference>
<dbReference type="InterPro" id="IPR033910">
    <property type="entry name" value="GluRS_core"/>
</dbReference>
<dbReference type="InterPro" id="IPR014729">
    <property type="entry name" value="Rossmann-like_a/b/a_fold"/>
</dbReference>
<dbReference type="NCBIfam" id="TIGR00464">
    <property type="entry name" value="gltX_bact"/>
    <property type="match status" value="1"/>
</dbReference>
<dbReference type="PANTHER" id="PTHR43311">
    <property type="entry name" value="GLUTAMATE--TRNA LIGASE"/>
    <property type="match status" value="1"/>
</dbReference>
<dbReference type="PANTHER" id="PTHR43311:SF2">
    <property type="entry name" value="GLUTAMATE--TRNA LIGASE, MITOCHONDRIAL-RELATED"/>
    <property type="match status" value="1"/>
</dbReference>
<dbReference type="Pfam" id="PF19269">
    <property type="entry name" value="Anticodon_2"/>
    <property type="match status" value="1"/>
</dbReference>
<dbReference type="Pfam" id="PF00749">
    <property type="entry name" value="tRNA-synt_1c"/>
    <property type="match status" value="1"/>
</dbReference>
<dbReference type="PRINTS" id="PR00987">
    <property type="entry name" value="TRNASYNTHGLU"/>
</dbReference>
<dbReference type="SUPFAM" id="SSF48163">
    <property type="entry name" value="An anticodon-binding domain of class I aminoacyl-tRNA synthetases"/>
    <property type="match status" value="1"/>
</dbReference>
<dbReference type="SUPFAM" id="SSF52374">
    <property type="entry name" value="Nucleotidylyl transferase"/>
    <property type="match status" value="1"/>
</dbReference>
<dbReference type="PROSITE" id="PS00178">
    <property type="entry name" value="AA_TRNA_LIGASE_I"/>
    <property type="match status" value="1"/>
</dbReference>
<protein>
    <recommendedName>
        <fullName evidence="2">Glutamate--tRNA ligase</fullName>
        <ecNumber evidence="2 11">6.1.1.17</ecNumber>
    </recommendedName>
    <alternativeName>
        <fullName evidence="2">Glutamyl-tRNA synthetase</fullName>
        <shortName evidence="2">GluRS</shortName>
    </alternativeName>
</protein>
<name>SYE_ECOLI</name>
<feature type="chain" id="PRO_0000119555" description="Glutamate--tRNA ligase">
    <location>
        <begin position="1"/>
        <end position="471"/>
    </location>
</feature>
<feature type="short sequence motif" description="'HIGH' region" evidence="2">
    <location>
        <begin position="9"/>
        <end position="19"/>
    </location>
</feature>
<feature type="short sequence motif" description="'KMSKS' region" evidence="2">
    <location>
        <begin position="237"/>
        <end position="241"/>
    </location>
</feature>
<feature type="binding site">
    <location>
        <position position="98"/>
    </location>
    <ligand>
        <name>Zn(2+)</name>
        <dbReference type="ChEBI" id="CHEBI:29105"/>
    </ligand>
</feature>
<feature type="binding site">
    <location>
        <position position="100"/>
    </location>
    <ligand>
        <name>Zn(2+)</name>
        <dbReference type="ChEBI" id="CHEBI:29105"/>
    </ligand>
</feature>
<feature type="binding site">
    <location>
        <position position="125"/>
    </location>
    <ligand>
        <name>Zn(2+)</name>
        <dbReference type="ChEBI" id="CHEBI:29105"/>
    </ligand>
</feature>
<feature type="binding site">
    <location>
        <position position="127"/>
    </location>
    <ligand>
        <name>Zn(2+)</name>
        <dbReference type="ChEBI" id="CHEBI:29105"/>
    </ligand>
</feature>
<feature type="binding site" evidence="1">
    <location>
        <position position="240"/>
    </location>
    <ligand>
        <name>ATP</name>
        <dbReference type="ChEBI" id="CHEBI:30616"/>
    </ligand>
</feature>
<feature type="modified residue" description="Phosphoserine" evidence="4 5">
    <location>
        <position position="239"/>
    </location>
</feature>
<feature type="mutagenesis site" description="10-fold decrease in activity. Strong decrease in zinc content." evidence="10">
    <original>C</original>
    <variation>S</variation>
    <location>
        <position position="98"/>
    </location>
</feature>
<feature type="mutagenesis site" description="Loss of activity. Strong decrease in zinc content." evidence="3 10">
    <original>C</original>
    <variation>S</variation>
    <location>
        <position position="100"/>
    </location>
</feature>
<feature type="mutagenesis site" description="Does not prevent zinc binding. Reduces only 2-fold the binding affinity for tRNA(Glu), but reduces more than 10-fold the affinity for glutamate in the presence of tRNA(Glu)." evidence="3 10">
    <original>C</original>
    <variation>Y</variation>
    <location>
        <position position="100"/>
    </location>
</feature>
<feature type="mutagenesis site" description="Loss of activity. Strong decrease in zinc content." evidence="10">
    <original>C</original>
    <variation>S</variation>
    <location>
        <position position="125"/>
    </location>
</feature>
<feature type="mutagenesis site" description="10-fold decrease in activity. Strong decrease in zinc content." evidence="10">
    <original>H</original>
    <variation>Q</variation>
    <location>
        <position position="127"/>
    </location>
</feature>
<feature type="mutagenesis site" description="No change in activity or in zinc content." evidence="10">
    <original>H</original>
    <variation>Q</variation>
    <location>
        <position position="129"/>
    </location>
</feature>
<feature type="mutagenesis site" description="No change in activity or in zinc content." evidence="10">
    <original>H</original>
    <variation>Q</variation>
    <location>
        <position position="131"/>
    </location>
</feature>
<feature type="mutagenesis site" description="No change in activity or in zinc content." evidence="10">
    <original>H</original>
    <variation>Q</variation>
    <location>
        <position position="132"/>
    </location>
</feature>
<feature type="mutagenesis site" description="No change in activity or in zinc content." evidence="10">
    <original>C</original>
    <variation>S</variation>
    <location>
        <position position="138"/>
    </location>
</feature>
<feature type="mutagenesis site" description="Does not aminoacylate tRNA(Glu), not phosphorylated by HipA." evidence="4">
    <original>S</original>
    <variation>D</variation>
    <location>
        <position position="239"/>
    </location>
</feature>
<feature type="strand" evidence="12">
    <location>
        <begin position="4"/>
        <end position="7"/>
    </location>
</feature>
<feature type="helix" evidence="12">
    <location>
        <begin position="17"/>
        <end position="32"/>
    </location>
</feature>
<feature type="strand" evidence="12">
    <location>
        <begin position="36"/>
        <end position="41"/>
    </location>
</feature>
<feature type="turn" evidence="12">
    <location>
        <begin position="46"/>
        <end position="48"/>
    </location>
</feature>
<feature type="helix" evidence="12">
    <location>
        <begin position="51"/>
        <end position="63"/>
    </location>
</feature>
<feature type="strand" evidence="12">
    <location>
        <begin position="69"/>
        <end position="74"/>
    </location>
</feature>
<feature type="helix" evidence="12">
    <location>
        <begin position="79"/>
        <end position="92"/>
    </location>
</feature>
<feature type="strand" evidence="12">
    <location>
        <begin position="93"/>
        <end position="98"/>
    </location>
</feature>
<feature type="helix" evidence="12">
    <location>
        <begin position="102"/>
        <end position="114"/>
    </location>
</feature>
<feature type="turn" evidence="12">
    <location>
        <begin position="124"/>
        <end position="127"/>
    </location>
</feature>
<feature type="strand" evidence="12">
    <location>
        <begin position="139"/>
        <end position="142"/>
    </location>
</feature>
<feature type="strand" evidence="12">
    <location>
        <begin position="147"/>
        <end position="154"/>
    </location>
</feature>
<feature type="turn" evidence="12">
    <location>
        <begin position="155"/>
        <end position="157"/>
    </location>
</feature>
<feature type="strand" evidence="12">
    <location>
        <begin position="158"/>
        <end position="163"/>
    </location>
</feature>
<feature type="strand" evidence="12">
    <location>
        <begin position="171"/>
        <end position="173"/>
    </location>
</feature>
<feature type="strand" evidence="12">
    <location>
        <begin position="175"/>
        <end position="177"/>
    </location>
</feature>
<feature type="helix" evidence="12">
    <location>
        <begin position="181"/>
        <end position="191"/>
    </location>
</feature>
<feature type="strand" evidence="12">
    <location>
        <begin position="196"/>
        <end position="199"/>
    </location>
</feature>
<feature type="helix" evidence="12">
    <location>
        <begin position="202"/>
        <end position="204"/>
    </location>
</feature>
<feature type="helix" evidence="12">
    <location>
        <begin position="207"/>
        <end position="216"/>
    </location>
</feature>
<feature type="strand" evidence="12">
    <location>
        <begin position="223"/>
        <end position="226"/>
    </location>
</feature>
<feature type="strand" evidence="12">
    <location>
        <begin position="233"/>
        <end position="237"/>
    </location>
</feature>
<feature type="turn" evidence="12">
    <location>
        <begin position="240"/>
        <end position="242"/>
    </location>
</feature>
<feature type="helix" evidence="12">
    <location>
        <begin position="247"/>
        <end position="253"/>
    </location>
</feature>
<feature type="helix" evidence="12">
    <location>
        <begin position="257"/>
        <end position="265"/>
    </location>
</feature>
<feature type="turn" evidence="12">
    <location>
        <begin position="266"/>
        <end position="268"/>
    </location>
</feature>
<feature type="helix" evidence="12">
    <location>
        <begin position="279"/>
        <end position="285"/>
    </location>
</feature>
<feature type="helix" evidence="12">
    <location>
        <begin position="288"/>
        <end position="290"/>
    </location>
</feature>
<feature type="helix" evidence="12">
    <location>
        <begin position="300"/>
        <end position="313"/>
    </location>
</feature>
<feature type="helix" evidence="12">
    <location>
        <begin position="316"/>
        <end position="330"/>
    </location>
</feature>
<feature type="strand" evidence="12">
    <location>
        <begin position="335"/>
        <end position="337"/>
    </location>
</feature>
<feature type="helix" evidence="12">
    <location>
        <begin position="340"/>
        <end position="346"/>
    </location>
</feature>
<feature type="turn" evidence="12">
    <location>
        <begin position="348"/>
        <end position="350"/>
    </location>
</feature>
<feature type="helix" evidence="12">
    <location>
        <begin position="354"/>
        <end position="358"/>
    </location>
</feature>
<feature type="helix" evidence="12">
    <location>
        <begin position="362"/>
        <end position="364"/>
    </location>
</feature>
<feature type="helix" evidence="12">
    <location>
        <begin position="373"/>
        <end position="376"/>
    </location>
</feature>
<feature type="turn" evidence="12">
    <location>
        <begin position="382"/>
        <end position="384"/>
    </location>
</feature>
<feature type="helix" evidence="12">
    <location>
        <begin position="385"/>
        <end position="395"/>
    </location>
</feature>
<feature type="helix" evidence="12">
    <location>
        <begin position="403"/>
        <end position="412"/>
    </location>
</feature>
<feature type="turn" evidence="12">
    <location>
        <begin position="413"/>
        <end position="418"/>
    </location>
</feature>
<feature type="helix" evidence="12">
    <location>
        <begin position="422"/>
        <end position="433"/>
    </location>
</feature>
<feature type="strand" evidence="12">
    <location>
        <begin position="434"/>
        <end position="436"/>
    </location>
</feature>
<feature type="helix" evidence="12">
    <location>
        <begin position="441"/>
        <end position="447"/>
    </location>
</feature>
<feature type="helix" evidence="12">
    <location>
        <begin position="450"/>
        <end position="464"/>
    </location>
</feature>
<sequence>MKIKTRFAPSPTGYLHVGGARTALYSWLFARNHGGEFVLRIEDTDLERSTPEAIEAIMDGMNWLSLEWDEGPYYQTKRFDRYNAVIDQMLEEGTAYKCYCSKERLEALREEQMAKGEKPRYDGRCRHSHEHHADDEPCVVRFANPQEGSVVFDDQIRGPIEFSNQELDDLIIRRTDGSPTYNFCVVVDDWDMEITHVIRGEDHINNTPRQINILKALKAPVPVYAHVSMINGDDGKKLSKRHGAVSVMQYRDDGYLPEALLNYLVRLGWSHGDQEIFTREEMIKYFTLNAVSKSASAFNTDKLLWLNHHYINALPPEYVATHLQWHIEQENIDTRNGPQLADLVKLLGERCKTLKEMAQSCRYFYEDFAEFDADAAKKHLRPVARQPLEVVRDKLAAITDWTAENVHHAIQATADELEVGMGKVGMPLRVAVTGAGQSPALDVTVHAIGKTRSIERINKALDFIAERENQQ</sequence>
<organism>
    <name type="scientific">Escherichia coli (strain K12)</name>
    <dbReference type="NCBI Taxonomy" id="83333"/>
    <lineage>
        <taxon>Bacteria</taxon>
        <taxon>Pseudomonadati</taxon>
        <taxon>Pseudomonadota</taxon>
        <taxon>Gammaproteobacteria</taxon>
        <taxon>Enterobacterales</taxon>
        <taxon>Enterobacteriaceae</taxon>
        <taxon>Escherichia</taxon>
    </lineage>
</organism>
<proteinExistence type="evidence at protein level"/>